<comment type="function">
    <text>Flagellin is the subunit protein which polymerizes to form the filaments of archaeal flagella.</text>
</comment>
<comment type="subcellular location">
    <subcellularLocation>
        <location>Archaeal flagellum</location>
    </subcellularLocation>
</comment>
<comment type="PTM">
    <text>Glycosylated.</text>
</comment>
<comment type="miscellaneous">
    <text>There are 2 or 3 different flagellins in M.hungatei.</text>
</comment>
<comment type="similarity">
    <text evidence="1">Belongs to the archaeal flagellin family.</text>
</comment>
<accession>P17603</accession>
<protein>
    <recommendedName>
        <fullName>24 kDa flagellin</fullName>
    </recommendedName>
</protein>
<reference key="1">
    <citation type="journal article" date="1990" name="Biochem. Biophys. Res. Commun.">
        <title>Conserved N-terminal sequences in the flagellins of archaebacteria.</title>
        <authorList>
            <person name="Kalmokoff M.L."/>
            <person name="Karnauchow T.M."/>
            <person name="Jarrell K.F."/>
        </authorList>
    </citation>
    <scope>PROTEIN SEQUENCE</scope>
    <source>
        <strain>GP1</strain>
    </source>
</reference>
<dbReference type="PIR" id="B34624">
    <property type="entry name" value="B34624"/>
</dbReference>
<dbReference type="SMR" id="P17603"/>
<dbReference type="GO" id="GO:0097589">
    <property type="term" value="C:archaeal-type flagellum"/>
    <property type="evidence" value="ECO:0007669"/>
    <property type="project" value="UniProtKB-SubCell"/>
</dbReference>
<dbReference type="GO" id="GO:0005198">
    <property type="term" value="F:structural molecule activity"/>
    <property type="evidence" value="ECO:0007669"/>
    <property type="project" value="InterPro"/>
</dbReference>
<dbReference type="GO" id="GO:0097588">
    <property type="term" value="P:archaeal or bacterial-type flagellum-dependent cell motility"/>
    <property type="evidence" value="ECO:0007669"/>
    <property type="project" value="InterPro"/>
</dbReference>
<dbReference type="InterPro" id="IPR013373">
    <property type="entry name" value="Flagellin/pilin_N_arc"/>
</dbReference>
<dbReference type="InterPro" id="IPR002774">
    <property type="entry name" value="Flagellin_arc"/>
</dbReference>
<dbReference type="NCBIfam" id="TIGR02537">
    <property type="entry name" value="arch_flag_Nterm"/>
    <property type="match status" value="1"/>
</dbReference>
<dbReference type="Pfam" id="PF01917">
    <property type="entry name" value="Arch_flagellin"/>
    <property type="match status" value="1"/>
</dbReference>
<organism>
    <name type="scientific">Methanospirillum hungatei</name>
    <dbReference type="NCBI Taxonomy" id="2203"/>
    <lineage>
        <taxon>Archaea</taxon>
        <taxon>Methanobacteriati</taxon>
        <taxon>Methanobacteriota</taxon>
        <taxon>Stenosarchaea group</taxon>
        <taxon>Methanomicrobia</taxon>
        <taxon>Methanomicrobiales</taxon>
        <taxon>Methanospirillaceae</taxon>
        <taxon>Methanospirillum</taxon>
    </lineage>
</organism>
<keyword id="KW-0974">Archaeal flagellum</keyword>
<keyword id="KW-0903">Direct protein sequencing</keyword>
<keyword id="KW-0325">Glycoprotein</keyword>
<evidence type="ECO:0000305" key="1"/>
<feature type="chain" id="PRO_0000157959" description="24 kDa flagellin">
    <location>
        <begin position="1"/>
        <end position="32" status="greater than"/>
    </location>
</feature>
<feature type="non-terminal residue">
    <location>
        <position position="32"/>
    </location>
</feature>
<name>FLA1_METHU</name>
<sequence length="32" mass="3282">FSGLEAAIVLIAFVVVAAVFSYVMLGAGFFAT</sequence>
<proteinExistence type="evidence at protein level"/>